<gene>
    <name type="primary">norM</name>
    <name type="ordered locus">slr0896</name>
</gene>
<keyword id="KW-0050">Antiport</keyword>
<keyword id="KW-0997">Cell inner membrane</keyword>
<keyword id="KW-1003">Cell membrane</keyword>
<keyword id="KW-0406">Ion transport</keyword>
<keyword id="KW-0472">Membrane</keyword>
<keyword id="KW-1185">Reference proteome</keyword>
<keyword id="KW-0812">Transmembrane</keyword>
<keyword id="KW-1133">Transmembrane helix</keyword>
<keyword id="KW-0813">Transport</keyword>
<reference key="1">
    <citation type="journal article" date="1995" name="DNA Res.">
        <title>Sequence analysis of the genome of the unicellular cyanobacterium Synechocystis sp. strain PCC6803. I. Sequence features in the 1 Mb region from map positions 64% to 92% of the genome.</title>
        <authorList>
            <person name="Kaneko T."/>
            <person name="Tanaka A."/>
            <person name="Sato S."/>
            <person name="Kotani H."/>
            <person name="Sazuka T."/>
            <person name="Miyajima N."/>
            <person name="Sugiura M."/>
            <person name="Tabata S."/>
        </authorList>
    </citation>
    <scope>NUCLEOTIDE SEQUENCE [LARGE SCALE GENOMIC DNA]</scope>
    <source>
        <strain>ATCC 27184 / PCC 6803 / N-1</strain>
    </source>
</reference>
<reference key="2">
    <citation type="journal article" date="1996" name="DNA Res.">
        <title>Sequence analysis of the genome of the unicellular cyanobacterium Synechocystis sp. strain PCC6803. II. Sequence determination of the entire genome and assignment of potential protein-coding regions.</title>
        <authorList>
            <person name="Kaneko T."/>
            <person name="Sato S."/>
            <person name="Kotani H."/>
            <person name="Tanaka A."/>
            <person name="Asamizu E."/>
            <person name="Nakamura Y."/>
            <person name="Miyajima N."/>
            <person name="Hirosawa M."/>
            <person name="Sugiura M."/>
            <person name="Sasamoto S."/>
            <person name="Kimura T."/>
            <person name="Hosouchi T."/>
            <person name="Matsuno A."/>
            <person name="Muraki A."/>
            <person name="Nakazaki N."/>
            <person name="Naruo K."/>
            <person name="Okumura S."/>
            <person name="Shimpo S."/>
            <person name="Takeuchi C."/>
            <person name="Wada T."/>
            <person name="Watanabe A."/>
            <person name="Yamada M."/>
            <person name="Yasuda M."/>
            <person name="Tabata S."/>
        </authorList>
    </citation>
    <scope>NUCLEOTIDE SEQUENCE [LARGE SCALE GENOMIC DNA]</scope>
    <source>
        <strain>ATCC 27184 / PCC 6803 / Kazusa</strain>
    </source>
</reference>
<evidence type="ECO:0000250" key="1"/>
<evidence type="ECO:0000255" key="2"/>
<evidence type="ECO:0000305" key="3"/>
<name>NORM_SYNY3</name>
<organism>
    <name type="scientific">Synechocystis sp. (strain ATCC 27184 / PCC 6803 / Kazusa)</name>
    <dbReference type="NCBI Taxonomy" id="1111708"/>
    <lineage>
        <taxon>Bacteria</taxon>
        <taxon>Bacillati</taxon>
        <taxon>Cyanobacteriota</taxon>
        <taxon>Cyanophyceae</taxon>
        <taxon>Synechococcales</taxon>
        <taxon>Merismopediaceae</taxon>
        <taxon>Synechocystis</taxon>
    </lineage>
</organism>
<accession>Q55364</accession>
<proteinExistence type="inferred from homology"/>
<protein>
    <recommendedName>
        <fullName>Probable multidrug resistance protein NorM</fullName>
    </recommendedName>
    <alternativeName>
        <fullName>Multidrug-efflux transporter</fullName>
    </alternativeName>
</protein>
<sequence>MTDISMRFGMQAEAREFLKLAVPLAGAQMAQAATGFVDTVMMGWLGQDVLAAGGLATMIFMAFMMTGVGLISGVSPLVAEAYGAGQTRRIGQLTRQGLWIVLLLSIPGMLFITHLNGVMHWSGQADTTIILSDSYLNVMAWGLFPAIAFATLRGCIIALSQARPIMLIVIAATLFNILGNYGLGFGKWGFPALGITGLAIASISAHWIMFLSLLVYMLWHKPLHQYSLFDSLHHLKPRILQQLLWVGGPIGIAAVLEYGLYLTASFFMGALGTPILAAHQVVSQTVLVLFMVPLAMSYAATVRVGQWFGQQHWPQIRQAALVSIGLAVLFMLTAGIALLAYPQQIIGLYLDLNDPANGEALNVGISIMKIAAFGLVLDGLQRTANGVLQGLQDTRIPMVLGTIAYWGIGLTASYLLGFYTPLSGAGVWIGTYIGLAAASIAYLWRFQKVMVRKKSLPVARS</sequence>
<feature type="chain" id="PRO_0000164242" description="Probable multidrug resistance protein NorM">
    <location>
        <begin position="1"/>
        <end position="461"/>
    </location>
</feature>
<feature type="transmembrane region" description="Helical" evidence="2">
    <location>
        <begin position="17"/>
        <end position="37"/>
    </location>
</feature>
<feature type="transmembrane region" description="Helical" evidence="2">
    <location>
        <begin position="51"/>
        <end position="71"/>
    </location>
</feature>
<feature type="transmembrane region" description="Helical" evidence="2">
    <location>
        <begin position="98"/>
        <end position="118"/>
    </location>
</feature>
<feature type="transmembrane region" description="Helical" evidence="2">
    <location>
        <begin position="138"/>
        <end position="158"/>
    </location>
</feature>
<feature type="transmembrane region" description="Helical" evidence="2">
    <location>
        <begin position="165"/>
        <end position="185"/>
    </location>
</feature>
<feature type="transmembrane region" description="Helical" evidence="2">
    <location>
        <begin position="198"/>
        <end position="218"/>
    </location>
</feature>
<feature type="transmembrane region" description="Helical" evidence="2">
    <location>
        <begin position="243"/>
        <end position="263"/>
    </location>
</feature>
<feature type="transmembrane region" description="Helical" evidence="2">
    <location>
        <begin position="275"/>
        <end position="295"/>
    </location>
</feature>
<feature type="transmembrane region" description="Helical" evidence="2">
    <location>
        <begin position="320"/>
        <end position="340"/>
    </location>
</feature>
<feature type="transmembrane region" description="Helical" evidence="2">
    <location>
        <begin position="360"/>
        <end position="380"/>
    </location>
</feature>
<feature type="transmembrane region" description="Helical" evidence="2">
    <location>
        <begin position="398"/>
        <end position="418"/>
    </location>
</feature>
<feature type="transmembrane region" description="Helical" evidence="2">
    <location>
        <begin position="424"/>
        <end position="444"/>
    </location>
</feature>
<dbReference type="EMBL" id="BA000022">
    <property type="protein sequence ID" value="BAA10446.1"/>
    <property type="molecule type" value="Genomic_DNA"/>
</dbReference>
<dbReference type="PIR" id="S75711">
    <property type="entry name" value="S75711"/>
</dbReference>
<dbReference type="SMR" id="Q55364"/>
<dbReference type="FunCoup" id="Q55364">
    <property type="interactions" value="178"/>
</dbReference>
<dbReference type="STRING" id="1148.gene:10499947"/>
<dbReference type="PaxDb" id="1148-1001206"/>
<dbReference type="EnsemblBacteria" id="BAA10446">
    <property type="protein sequence ID" value="BAA10446"/>
    <property type="gene ID" value="BAA10446"/>
</dbReference>
<dbReference type="KEGG" id="syn:slr0896"/>
<dbReference type="eggNOG" id="COG0534">
    <property type="taxonomic scope" value="Bacteria"/>
</dbReference>
<dbReference type="InParanoid" id="Q55364"/>
<dbReference type="PhylomeDB" id="Q55364"/>
<dbReference type="Proteomes" id="UP000001425">
    <property type="component" value="Chromosome"/>
</dbReference>
<dbReference type="GO" id="GO:0005886">
    <property type="term" value="C:plasma membrane"/>
    <property type="evidence" value="ECO:0000318"/>
    <property type="project" value="GO_Central"/>
</dbReference>
<dbReference type="GO" id="GO:0015297">
    <property type="term" value="F:antiporter activity"/>
    <property type="evidence" value="ECO:0007669"/>
    <property type="project" value="UniProtKB-KW"/>
</dbReference>
<dbReference type="GO" id="GO:0042910">
    <property type="term" value="F:xenobiotic transmembrane transporter activity"/>
    <property type="evidence" value="ECO:0007669"/>
    <property type="project" value="InterPro"/>
</dbReference>
<dbReference type="GO" id="GO:0006811">
    <property type="term" value="P:monoatomic ion transport"/>
    <property type="evidence" value="ECO:0007669"/>
    <property type="project" value="UniProtKB-KW"/>
</dbReference>
<dbReference type="CDD" id="cd13131">
    <property type="entry name" value="MATE_NorM_like"/>
    <property type="match status" value="1"/>
</dbReference>
<dbReference type="InterPro" id="IPR002528">
    <property type="entry name" value="MATE_fam"/>
</dbReference>
<dbReference type="InterPro" id="IPR050222">
    <property type="entry name" value="MATE_MdtK"/>
</dbReference>
<dbReference type="InterPro" id="IPR048279">
    <property type="entry name" value="MdtK-like"/>
</dbReference>
<dbReference type="NCBIfam" id="TIGR00797">
    <property type="entry name" value="matE"/>
    <property type="match status" value="1"/>
</dbReference>
<dbReference type="PANTHER" id="PTHR43298:SF2">
    <property type="entry name" value="FMN_FAD EXPORTER YEEO-RELATED"/>
    <property type="match status" value="1"/>
</dbReference>
<dbReference type="PANTHER" id="PTHR43298">
    <property type="entry name" value="MULTIDRUG RESISTANCE PROTEIN NORM-RELATED"/>
    <property type="match status" value="1"/>
</dbReference>
<dbReference type="Pfam" id="PF01554">
    <property type="entry name" value="MatE"/>
    <property type="match status" value="2"/>
</dbReference>
<dbReference type="PIRSF" id="PIRSF006603">
    <property type="entry name" value="DinF"/>
    <property type="match status" value="1"/>
</dbReference>
<comment type="function">
    <text evidence="1">Multidrug efflux pump.</text>
</comment>
<comment type="subcellular location">
    <subcellularLocation>
        <location evidence="1">Cell inner membrane</location>
        <topology evidence="1">Multi-pass membrane protein</topology>
    </subcellularLocation>
</comment>
<comment type="similarity">
    <text evidence="3">Belongs to the multi antimicrobial extrusion (MATE) (TC 2.A.66.1) family.</text>
</comment>